<dbReference type="EC" id="1.97.1.12" evidence="1"/>
<dbReference type="EMBL" id="CP000097">
    <property type="protein sequence ID" value="ABB26952.1"/>
    <property type="molecule type" value="Genomic_DNA"/>
</dbReference>
<dbReference type="RefSeq" id="WP_011360743.1">
    <property type="nucleotide sequence ID" value="NC_007513.1"/>
</dbReference>
<dbReference type="SMR" id="Q3AUT6"/>
<dbReference type="STRING" id="316279.Syncc9902_1994"/>
<dbReference type="KEGG" id="sye:Syncc9902_1994"/>
<dbReference type="eggNOG" id="COG2885">
    <property type="taxonomic scope" value="Bacteria"/>
</dbReference>
<dbReference type="HOGENOM" id="CLU_016126_1_0_3"/>
<dbReference type="OrthoDB" id="499313at2"/>
<dbReference type="Proteomes" id="UP000002712">
    <property type="component" value="Chromosome"/>
</dbReference>
<dbReference type="GO" id="GO:0009522">
    <property type="term" value="C:photosystem I"/>
    <property type="evidence" value="ECO:0007669"/>
    <property type="project" value="UniProtKB-KW"/>
</dbReference>
<dbReference type="GO" id="GO:0031676">
    <property type="term" value="C:plasma membrane-derived thylakoid membrane"/>
    <property type="evidence" value="ECO:0007669"/>
    <property type="project" value="UniProtKB-SubCell"/>
</dbReference>
<dbReference type="GO" id="GO:0051539">
    <property type="term" value="F:4 iron, 4 sulfur cluster binding"/>
    <property type="evidence" value="ECO:0007669"/>
    <property type="project" value="UniProtKB-KW"/>
</dbReference>
<dbReference type="GO" id="GO:0016168">
    <property type="term" value="F:chlorophyll binding"/>
    <property type="evidence" value="ECO:0007669"/>
    <property type="project" value="UniProtKB-KW"/>
</dbReference>
<dbReference type="GO" id="GO:0009055">
    <property type="term" value="F:electron transfer activity"/>
    <property type="evidence" value="ECO:0007669"/>
    <property type="project" value="UniProtKB-UniRule"/>
</dbReference>
<dbReference type="GO" id="GO:0000287">
    <property type="term" value="F:magnesium ion binding"/>
    <property type="evidence" value="ECO:0007669"/>
    <property type="project" value="UniProtKB-UniRule"/>
</dbReference>
<dbReference type="GO" id="GO:0016491">
    <property type="term" value="F:oxidoreductase activity"/>
    <property type="evidence" value="ECO:0007669"/>
    <property type="project" value="UniProtKB-KW"/>
</dbReference>
<dbReference type="GO" id="GO:0015979">
    <property type="term" value="P:photosynthesis"/>
    <property type="evidence" value="ECO:0007669"/>
    <property type="project" value="UniProtKB-UniRule"/>
</dbReference>
<dbReference type="FunFam" id="1.20.1130.10:FF:000001">
    <property type="entry name" value="Photosystem I P700 chlorophyll a apoprotein A2"/>
    <property type="match status" value="1"/>
</dbReference>
<dbReference type="Gene3D" id="1.20.1130.10">
    <property type="entry name" value="Photosystem I PsaA/PsaB"/>
    <property type="match status" value="1"/>
</dbReference>
<dbReference type="HAMAP" id="MF_00482">
    <property type="entry name" value="PSI_PsaB"/>
    <property type="match status" value="1"/>
</dbReference>
<dbReference type="InterPro" id="IPR001280">
    <property type="entry name" value="PSI_PsaA/B"/>
</dbReference>
<dbReference type="InterPro" id="IPR020586">
    <property type="entry name" value="PSI_PsaA/B_CS"/>
</dbReference>
<dbReference type="InterPro" id="IPR036408">
    <property type="entry name" value="PSI_PsaA/B_sf"/>
</dbReference>
<dbReference type="InterPro" id="IPR006244">
    <property type="entry name" value="PSI_PsaB"/>
</dbReference>
<dbReference type="NCBIfam" id="TIGR01336">
    <property type="entry name" value="psaB"/>
    <property type="match status" value="1"/>
</dbReference>
<dbReference type="PANTHER" id="PTHR30128">
    <property type="entry name" value="OUTER MEMBRANE PROTEIN, OMPA-RELATED"/>
    <property type="match status" value="1"/>
</dbReference>
<dbReference type="PANTHER" id="PTHR30128:SF19">
    <property type="entry name" value="PHOTOSYSTEM I P700 CHLOROPHYLL A APOPROTEIN A1-RELATED"/>
    <property type="match status" value="1"/>
</dbReference>
<dbReference type="Pfam" id="PF00223">
    <property type="entry name" value="PsaA_PsaB"/>
    <property type="match status" value="1"/>
</dbReference>
<dbReference type="PIRSF" id="PIRSF002905">
    <property type="entry name" value="PSI_A"/>
    <property type="match status" value="1"/>
</dbReference>
<dbReference type="PRINTS" id="PR00257">
    <property type="entry name" value="PHOTSYSPSAAB"/>
</dbReference>
<dbReference type="SUPFAM" id="SSF81558">
    <property type="entry name" value="Photosystem I subunits PsaA/PsaB"/>
    <property type="match status" value="1"/>
</dbReference>
<dbReference type="PROSITE" id="PS00419">
    <property type="entry name" value="PHOTOSYSTEM_I_PSAAB"/>
    <property type="match status" value="1"/>
</dbReference>
<name>PSAB_SYNS9</name>
<comment type="function">
    <text evidence="1">PsaA and PsaB bind P700, the primary electron donor of photosystem I (PSI), as well as the electron acceptors A0, A1 and FX. PSI is a plastocyanin/cytochrome c6-ferredoxin oxidoreductase, converting photonic excitation into a charge separation, which transfers an electron from the donor P700 chlorophyll pair to the spectroscopically characterized acceptors A0, A1, FX, FA and FB in turn. Oxidized P700 is reduced on the lumenal side of the thylakoid membrane by plastocyanin or cytochrome c6.</text>
</comment>
<comment type="catalytic activity">
    <reaction evidence="1">
        <text>reduced [plastocyanin] + hnu + oxidized [2Fe-2S]-[ferredoxin] = oxidized [plastocyanin] + reduced [2Fe-2S]-[ferredoxin]</text>
        <dbReference type="Rhea" id="RHEA:30407"/>
        <dbReference type="Rhea" id="RHEA-COMP:10000"/>
        <dbReference type="Rhea" id="RHEA-COMP:10001"/>
        <dbReference type="Rhea" id="RHEA-COMP:10039"/>
        <dbReference type="Rhea" id="RHEA-COMP:10040"/>
        <dbReference type="ChEBI" id="CHEBI:29036"/>
        <dbReference type="ChEBI" id="CHEBI:30212"/>
        <dbReference type="ChEBI" id="CHEBI:33737"/>
        <dbReference type="ChEBI" id="CHEBI:33738"/>
        <dbReference type="ChEBI" id="CHEBI:49552"/>
        <dbReference type="EC" id="1.97.1.12"/>
    </reaction>
</comment>
<comment type="cofactor">
    <text evidence="1">PSI electron transfer chain: 5 chlorophyll a, 1 chlorophyll a', 2 phylloquinones and 3 4Fe-4S clusters. PSI core antenna: 90 chlorophyll a, 22 carotenoids, 3 phospholipids and 1 galactolipid. P700 is a chlorophyll a/chlorophyll a' dimer, A0 is one or more chlorophyll a, A1 is one or both phylloquinones and FX is a shared 4Fe-4S iron-sulfur center.</text>
</comment>
<comment type="subunit">
    <text evidence="1">The PsaA/B heterodimer binds the P700 chlorophyll special pair and subsequent electron acceptors. PSI consists of a core antenna complex that captures photons, and an electron transfer chain that converts photonic excitation into a charge separation. The cyanobacterial PSI reaction center is composed of one copy each of PsaA,B,C,D,E,F,I,J,K,L,M and X, and forms trimeric complexes.</text>
</comment>
<comment type="subcellular location">
    <subcellularLocation>
        <location evidence="1">Cellular thylakoid membrane</location>
        <topology evidence="1">Multi-pass membrane protein</topology>
    </subcellularLocation>
</comment>
<comment type="similarity">
    <text evidence="1">Belongs to the PsaA/PsaB family.</text>
</comment>
<proteinExistence type="inferred from homology"/>
<keyword id="KW-0004">4Fe-4S</keyword>
<keyword id="KW-0148">Chlorophyll</keyword>
<keyword id="KW-0157">Chromophore</keyword>
<keyword id="KW-0249">Electron transport</keyword>
<keyword id="KW-0408">Iron</keyword>
<keyword id="KW-0411">Iron-sulfur</keyword>
<keyword id="KW-0460">Magnesium</keyword>
<keyword id="KW-0472">Membrane</keyword>
<keyword id="KW-0479">Metal-binding</keyword>
<keyword id="KW-0560">Oxidoreductase</keyword>
<keyword id="KW-0602">Photosynthesis</keyword>
<keyword id="KW-0603">Photosystem I</keyword>
<keyword id="KW-1185">Reference proteome</keyword>
<keyword id="KW-0793">Thylakoid</keyword>
<keyword id="KW-0812">Transmembrane</keyword>
<keyword id="KW-1133">Transmembrane helix</keyword>
<keyword id="KW-0813">Transport</keyword>
<gene>
    <name evidence="1" type="primary">psaB</name>
    <name type="ordered locus">Syncc9902_1994</name>
</gene>
<sequence>MATKFPSFSQGLAQDPTTRRIWYGIATAHDFESHDGMTEERLYQKLFSTHFGHLAIIGLWVSGNLFHIAWQGNFEQWVADPLHVRPIAHAIWDPHFGQGAIDAFTQAGASSPVNIAYSGLYHWFYTIGMTTNAELYQGSIFMMILSAWALFAGWLHLQPKFRPSLAWFKNAESRLNHHLAVLFGFSSIAWTGHLVHVAIPESRGQHVGWDNFLSVMPHPAGLGPFFTGNWGVYAQNPDSMNQVFGSTEGSGTAILTFLGGFHPQTEALWLTDIAHHHLAIGCLFVIAGHMYRTNFGIGHSIKEILETHNPPKGTPGDLGAGHKGLYDTINNSLHFQLGLALASLGVVTSLVAQHMYAMPSYAFIAKDYTTSAALYTHHQYIAIALMCGAFAHGAIFFIRDYDPEANKDNVLARMLEHKEAIISHLSWVSLFLGFHTLGLYVHNDVVVAFGTPEKQILVEPVFAQFVQAASGKAIYGFDVLLSNAGGAAANANAAYMDGWMGAINGNTDVFLPIGPGDFLVHHAIALGLHTTTLILVKGALDARGSKLMPDKKDFGYSFPCDGPGRGGTCDISAWDAFYLAVFWALNTVGWLTFYWHWKHLAIWSGNVAQFNESSTYLMGWFRDYLWLNSSQLINGYNPFGSNNLAVWSWMFLFGHLVWATGFMFLISWRGYWQELIETIVWAHQRSPIANMMGWRDKPVALSIVQARVVGLAHFSVGYVLTYAAFLIASTSGKFG</sequence>
<feature type="chain" id="PRO_0000300025" description="Photosystem I P700 chlorophyll a apoprotein A2">
    <location>
        <begin position="1"/>
        <end position="735"/>
    </location>
</feature>
<feature type="transmembrane region" description="Helical; Name=I" evidence="1">
    <location>
        <begin position="46"/>
        <end position="69"/>
    </location>
</feature>
<feature type="transmembrane region" description="Helical; Name=II" evidence="1">
    <location>
        <begin position="135"/>
        <end position="158"/>
    </location>
</feature>
<feature type="transmembrane region" description="Helical; Name=III" evidence="1">
    <location>
        <begin position="175"/>
        <end position="199"/>
    </location>
</feature>
<feature type="transmembrane region" description="Helical; Name=IV" evidence="1">
    <location>
        <begin position="273"/>
        <end position="291"/>
    </location>
</feature>
<feature type="transmembrane region" description="Helical; Name=V" evidence="1">
    <location>
        <begin position="333"/>
        <end position="356"/>
    </location>
</feature>
<feature type="transmembrane region" description="Helical; Name=VI" evidence="1">
    <location>
        <begin position="372"/>
        <end position="398"/>
    </location>
</feature>
<feature type="transmembrane region" description="Helical; Name=VII" evidence="1">
    <location>
        <begin position="420"/>
        <end position="442"/>
    </location>
</feature>
<feature type="transmembrane region" description="Helical; Name=VIII" evidence="1">
    <location>
        <begin position="518"/>
        <end position="536"/>
    </location>
</feature>
<feature type="transmembrane region" description="Helical; Name=IX" evidence="1">
    <location>
        <begin position="576"/>
        <end position="597"/>
    </location>
</feature>
<feature type="transmembrane region" description="Helical; Name=X" evidence="1">
    <location>
        <begin position="644"/>
        <end position="666"/>
    </location>
</feature>
<feature type="transmembrane region" description="Helical; Name=XI" evidence="1">
    <location>
        <begin position="708"/>
        <end position="728"/>
    </location>
</feature>
<feature type="binding site" evidence="1">
    <location>
        <position position="560"/>
    </location>
    <ligand>
        <name>[4Fe-4S] cluster</name>
        <dbReference type="ChEBI" id="CHEBI:49883"/>
        <note>ligand shared between dimeric partners</note>
    </ligand>
</feature>
<feature type="binding site" evidence="1">
    <location>
        <position position="569"/>
    </location>
    <ligand>
        <name>[4Fe-4S] cluster</name>
        <dbReference type="ChEBI" id="CHEBI:49883"/>
        <note>ligand shared between dimeric partners</note>
    </ligand>
</feature>
<feature type="binding site" description="axial binding residue" evidence="1">
    <location>
        <position position="655"/>
    </location>
    <ligand>
        <name>chlorophyll a</name>
        <dbReference type="ChEBI" id="CHEBI:58416"/>
        <label>B1</label>
    </ligand>
    <ligandPart>
        <name>Mg</name>
        <dbReference type="ChEBI" id="CHEBI:25107"/>
    </ligandPart>
</feature>
<feature type="binding site" description="axial binding residue" evidence="1">
    <location>
        <position position="663"/>
    </location>
    <ligand>
        <name>chlorophyll a</name>
        <dbReference type="ChEBI" id="CHEBI:58416"/>
        <label>B3</label>
    </ligand>
    <ligandPart>
        <name>Mg</name>
        <dbReference type="ChEBI" id="CHEBI:25107"/>
    </ligandPart>
</feature>
<feature type="binding site" evidence="1">
    <location>
        <position position="671"/>
    </location>
    <ligand>
        <name>chlorophyll a</name>
        <dbReference type="ChEBI" id="CHEBI:58416"/>
        <label>B3</label>
    </ligand>
</feature>
<feature type="binding site" evidence="1">
    <location>
        <position position="672"/>
    </location>
    <ligand>
        <name>phylloquinone</name>
        <dbReference type="ChEBI" id="CHEBI:18067"/>
        <label>B</label>
    </ligand>
</feature>
<evidence type="ECO:0000255" key="1">
    <source>
        <dbReference type="HAMAP-Rule" id="MF_00482"/>
    </source>
</evidence>
<reference key="1">
    <citation type="submission" date="2005-08" db="EMBL/GenBank/DDBJ databases">
        <title>Complete sequence of Synechococcus sp. CC9902.</title>
        <authorList>
            <person name="Copeland A."/>
            <person name="Lucas S."/>
            <person name="Lapidus A."/>
            <person name="Barry K."/>
            <person name="Detter J.C."/>
            <person name="Glavina T."/>
            <person name="Hammon N."/>
            <person name="Israni S."/>
            <person name="Pitluck S."/>
            <person name="Martinez M."/>
            <person name="Schmutz J."/>
            <person name="Larimer F."/>
            <person name="Land M."/>
            <person name="Kyrpides N."/>
            <person name="Ivanova N."/>
            <person name="Richardson P."/>
        </authorList>
    </citation>
    <scope>NUCLEOTIDE SEQUENCE [LARGE SCALE GENOMIC DNA]</scope>
    <source>
        <strain>CC9902</strain>
    </source>
</reference>
<accession>Q3AUT6</accession>
<protein>
    <recommendedName>
        <fullName evidence="1">Photosystem I P700 chlorophyll a apoprotein A2</fullName>
        <ecNumber evidence="1">1.97.1.12</ecNumber>
    </recommendedName>
    <alternativeName>
        <fullName evidence="1">PsaB</fullName>
    </alternativeName>
</protein>
<organism>
    <name type="scientific">Synechococcus sp. (strain CC9902)</name>
    <dbReference type="NCBI Taxonomy" id="316279"/>
    <lineage>
        <taxon>Bacteria</taxon>
        <taxon>Bacillati</taxon>
        <taxon>Cyanobacteriota</taxon>
        <taxon>Cyanophyceae</taxon>
        <taxon>Synechococcales</taxon>
        <taxon>Synechococcaceae</taxon>
        <taxon>Synechococcus</taxon>
    </lineage>
</organism>